<sequence>MSHSVKIYDTCIGCTQCVRACPTDVLEMVPWDGCKASQIASAPRTEDCVGCKRCESACPTDFLSVRVYLGSETTRSMGLAY</sequence>
<protein>
    <recommendedName>
        <fullName evidence="2">Photosystem I iron-sulfur center</fullName>
        <ecNumber evidence="2">1.97.1.12</ecNumber>
    </recommendedName>
    <alternativeName>
        <fullName evidence="2">9 kDa polypeptide</fullName>
    </alternativeName>
    <alternativeName>
        <fullName evidence="2">PSI-C</fullName>
    </alternativeName>
    <alternativeName>
        <fullName evidence="2">Photosystem I subunit VII</fullName>
    </alternativeName>
    <alternativeName>
        <fullName evidence="2">PsaC</fullName>
    </alternativeName>
</protein>
<feature type="initiator methionine" description="Removed" evidence="1">
    <location>
        <position position="1"/>
    </location>
</feature>
<feature type="chain" id="PRO_0000275991" description="Photosystem I iron-sulfur center">
    <location>
        <begin position="2"/>
        <end position="81"/>
    </location>
</feature>
<feature type="domain" description="4Fe-4S ferredoxin-type 1" evidence="2">
    <location>
        <begin position="2"/>
        <end position="31"/>
    </location>
</feature>
<feature type="domain" description="4Fe-4S ferredoxin-type 2" evidence="2">
    <location>
        <begin position="39"/>
        <end position="68"/>
    </location>
</feature>
<feature type="binding site" evidence="2">
    <location>
        <position position="11"/>
    </location>
    <ligand>
        <name>[4Fe-4S] cluster</name>
        <dbReference type="ChEBI" id="CHEBI:49883"/>
        <label>1</label>
    </ligand>
</feature>
<feature type="binding site" evidence="2">
    <location>
        <position position="14"/>
    </location>
    <ligand>
        <name>[4Fe-4S] cluster</name>
        <dbReference type="ChEBI" id="CHEBI:49883"/>
        <label>1</label>
    </ligand>
</feature>
<feature type="binding site" evidence="2">
    <location>
        <position position="17"/>
    </location>
    <ligand>
        <name>[4Fe-4S] cluster</name>
        <dbReference type="ChEBI" id="CHEBI:49883"/>
        <label>1</label>
    </ligand>
</feature>
<feature type="binding site" evidence="2">
    <location>
        <position position="21"/>
    </location>
    <ligand>
        <name>[4Fe-4S] cluster</name>
        <dbReference type="ChEBI" id="CHEBI:49883"/>
        <label>2</label>
    </ligand>
</feature>
<feature type="binding site" evidence="2">
    <location>
        <position position="48"/>
    </location>
    <ligand>
        <name>[4Fe-4S] cluster</name>
        <dbReference type="ChEBI" id="CHEBI:49883"/>
        <label>2</label>
    </ligand>
</feature>
<feature type="binding site" evidence="2">
    <location>
        <position position="51"/>
    </location>
    <ligand>
        <name>[4Fe-4S] cluster</name>
        <dbReference type="ChEBI" id="CHEBI:49883"/>
        <label>2</label>
    </ligand>
</feature>
<feature type="binding site" evidence="2">
    <location>
        <position position="54"/>
    </location>
    <ligand>
        <name>[4Fe-4S] cluster</name>
        <dbReference type="ChEBI" id="CHEBI:49883"/>
        <label>2</label>
    </ligand>
</feature>
<feature type="binding site" evidence="2">
    <location>
        <position position="58"/>
    </location>
    <ligand>
        <name>[4Fe-4S] cluster</name>
        <dbReference type="ChEBI" id="CHEBI:49883"/>
        <label>1</label>
    </ligand>
</feature>
<evidence type="ECO:0000250" key="1"/>
<evidence type="ECO:0000255" key="2">
    <source>
        <dbReference type="HAMAP-Rule" id="MF_01303"/>
    </source>
</evidence>
<organism>
    <name type="scientific">Oltmannsiellopsis viridis</name>
    <name type="common">Marine flagellate</name>
    <name type="synonym">Oltmannsiella viridis</name>
    <dbReference type="NCBI Taxonomy" id="51324"/>
    <lineage>
        <taxon>Eukaryota</taxon>
        <taxon>Viridiplantae</taxon>
        <taxon>Chlorophyta</taxon>
        <taxon>Ulvophyceae</taxon>
        <taxon>Oltmannsiellopsidales</taxon>
        <taxon>Oltmannsiellopsidaceae</taxon>
        <taxon>Oltmannsiellopsis</taxon>
    </lineage>
</organism>
<geneLocation type="chloroplast"/>
<dbReference type="EC" id="1.97.1.12" evidence="2"/>
<dbReference type="EMBL" id="DQ291132">
    <property type="protein sequence ID" value="ABB81926.1"/>
    <property type="molecule type" value="Genomic_DNA"/>
</dbReference>
<dbReference type="RefSeq" id="YP_635858.1">
    <property type="nucleotide sequence ID" value="NC_008099.1"/>
</dbReference>
<dbReference type="SMR" id="Q20EY7"/>
<dbReference type="GeneID" id="4100096"/>
<dbReference type="GO" id="GO:0009535">
    <property type="term" value="C:chloroplast thylakoid membrane"/>
    <property type="evidence" value="ECO:0007669"/>
    <property type="project" value="UniProtKB-SubCell"/>
</dbReference>
<dbReference type="GO" id="GO:0009522">
    <property type="term" value="C:photosystem I"/>
    <property type="evidence" value="ECO:0007669"/>
    <property type="project" value="UniProtKB-KW"/>
</dbReference>
<dbReference type="GO" id="GO:0051539">
    <property type="term" value="F:4 iron, 4 sulfur cluster binding"/>
    <property type="evidence" value="ECO:0007669"/>
    <property type="project" value="UniProtKB-KW"/>
</dbReference>
<dbReference type="GO" id="GO:0009055">
    <property type="term" value="F:electron transfer activity"/>
    <property type="evidence" value="ECO:0007669"/>
    <property type="project" value="UniProtKB-UniRule"/>
</dbReference>
<dbReference type="GO" id="GO:0046872">
    <property type="term" value="F:metal ion binding"/>
    <property type="evidence" value="ECO:0007669"/>
    <property type="project" value="UniProtKB-KW"/>
</dbReference>
<dbReference type="GO" id="GO:0016491">
    <property type="term" value="F:oxidoreductase activity"/>
    <property type="evidence" value="ECO:0007669"/>
    <property type="project" value="UniProtKB-KW"/>
</dbReference>
<dbReference type="GO" id="GO:0009773">
    <property type="term" value="P:photosynthetic electron transport in photosystem I"/>
    <property type="evidence" value="ECO:0007669"/>
    <property type="project" value="InterPro"/>
</dbReference>
<dbReference type="FunFam" id="3.30.70.20:FF:000001">
    <property type="entry name" value="Photosystem I iron-sulfur center"/>
    <property type="match status" value="1"/>
</dbReference>
<dbReference type="Gene3D" id="3.30.70.20">
    <property type="match status" value="1"/>
</dbReference>
<dbReference type="HAMAP" id="MF_01303">
    <property type="entry name" value="PSI_PsaC"/>
    <property type="match status" value="1"/>
</dbReference>
<dbReference type="InterPro" id="IPR017896">
    <property type="entry name" value="4Fe4S_Fe-S-bd"/>
</dbReference>
<dbReference type="InterPro" id="IPR017900">
    <property type="entry name" value="4Fe4S_Fe_S_CS"/>
</dbReference>
<dbReference type="InterPro" id="IPR050157">
    <property type="entry name" value="PSI_iron-sulfur_center"/>
</dbReference>
<dbReference type="InterPro" id="IPR017491">
    <property type="entry name" value="PSI_PsaC"/>
</dbReference>
<dbReference type="NCBIfam" id="TIGR03048">
    <property type="entry name" value="PS_I_psaC"/>
    <property type="match status" value="1"/>
</dbReference>
<dbReference type="PANTHER" id="PTHR24960:SF79">
    <property type="entry name" value="PHOTOSYSTEM I IRON-SULFUR CENTER"/>
    <property type="match status" value="1"/>
</dbReference>
<dbReference type="PANTHER" id="PTHR24960">
    <property type="entry name" value="PHOTOSYSTEM I IRON-SULFUR CENTER-RELATED"/>
    <property type="match status" value="1"/>
</dbReference>
<dbReference type="Pfam" id="PF12838">
    <property type="entry name" value="Fer4_7"/>
    <property type="match status" value="1"/>
</dbReference>
<dbReference type="SUPFAM" id="SSF54862">
    <property type="entry name" value="4Fe-4S ferredoxins"/>
    <property type="match status" value="1"/>
</dbReference>
<dbReference type="PROSITE" id="PS00198">
    <property type="entry name" value="4FE4S_FER_1"/>
    <property type="match status" value="2"/>
</dbReference>
<dbReference type="PROSITE" id="PS51379">
    <property type="entry name" value="4FE4S_FER_2"/>
    <property type="match status" value="2"/>
</dbReference>
<gene>
    <name evidence="2" type="primary">psaC</name>
</gene>
<name>PSAC_OLTVI</name>
<comment type="function">
    <text evidence="2">Apoprotein for the two 4Fe-4S centers FA and FB of photosystem I (PSI); essential for photochemical activity. FB is the terminal electron acceptor of PSI, donating electrons to ferredoxin. The C-terminus interacts with PsaA/B/D and helps assemble the protein into the PSI complex. Required for binding of PsaD and PsaE to PSI. PSI is a plastocyanin/cytochrome c6-ferredoxin oxidoreductase, converting photonic excitation into a charge separation, which transfers an electron from the donor P700 chlorophyll pair to the spectroscopically characterized acceptors A0, A1, FX, FA and FB in turn.</text>
</comment>
<comment type="catalytic activity">
    <reaction evidence="2">
        <text>reduced [plastocyanin] + hnu + oxidized [2Fe-2S]-[ferredoxin] = oxidized [plastocyanin] + reduced [2Fe-2S]-[ferredoxin]</text>
        <dbReference type="Rhea" id="RHEA:30407"/>
        <dbReference type="Rhea" id="RHEA-COMP:10000"/>
        <dbReference type="Rhea" id="RHEA-COMP:10001"/>
        <dbReference type="Rhea" id="RHEA-COMP:10039"/>
        <dbReference type="Rhea" id="RHEA-COMP:10040"/>
        <dbReference type="ChEBI" id="CHEBI:29036"/>
        <dbReference type="ChEBI" id="CHEBI:30212"/>
        <dbReference type="ChEBI" id="CHEBI:33737"/>
        <dbReference type="ChEBI" id="CHEBI:33738"/>
        <dbReference type="ChEBI" id="CHEBI:49552"/>
        <dbReference type="EC" id="1.97.1.12"/>
    </reaction>
</comment>
<comment type="cofactor">
    <cofactor evidence="2">
        <name>[4Fe-4S] cluster</name>
        <dbReference type="ChEBI" id="CHEBI:49883"/>
    </cofactor>
    <text evidence="2">Binds 2 [4Fe-4S] clusters. Cluster 2 is most probably the spectroscopically characterized electron acceptor FA and cluster 1 is most probably FB.</text>
</comment>
<comment type="subunit">
    <text evidence="2">The eukaryotic PSI reaction center is composed of at least 11 subunits.</text>
</comment>
<comment type="subcellular location">
    <subcellularLocation>
        <location evidence="2">Plastid</location>
        <location evidence="2">Chloroplast thylakoid membrane</location>
        <topology evidence="2">Peripheral membrane protein</topology>
        <orientation evidence="2">Stromal side</orientation>
    </subcellularLocation>
</comment>
<accession>Q20EY7</accession>
<reference key="1">
    <citation type="journal article" date="2006" name="BMC Biol.">
        <title>The complete chloroplast DNA sequence of the green alga Oltmannsiellopsis viridis reveals a distinctive quadripartite architecture in the chloroplast genome of early diverging ulvophytes.</title>
        <authorList>
            <person name="Pombert J.-F."/>
            <person name="Lemieux C."/>
            <person name="Turmel M."/>
        </authorList>
    </citation>
    <scope>NUCLEOTIDE SEQUENCE [LARGE SCALE GENOMIC DNA]</scope>
</reference>
<proteinExistence type="inferred from homology"/>
<keyword id="KW-0004">4Fe-4S</keyword>
<keyword id="KW-0150">Chloroplast</keyword>
<keyword id="KW-0249">Electron transport</keyword>
<keyword id="KW-0408">Iron</keyword>
<keyword id="KW-0411">Iron-sulfur</keyword>
<keyword id="KW-0472">Membrane</keyword>
<keyword id="KW-0479">Metal-binding</keyword>
<keyword id="KW-0560">Oxidoreductase</keyword>
<keyword id="KW-0602">Photosynthesis</keyword>
<keyword id="KW-0603">Photosystem I</keyword>
<keyword id="KW-0934">Plastid</keyword>
<keyword id="KW-0677">Repeat</keyword>
<keyword id="KW-0793">Thylakoid</keyword>
<keyword id="KW-0813">Transport</keyword>